<gene>
    <name type="primary">efp</name>
    <name type="ordered locus">MPN_029</name>
    <name type="ORF">MP125</name>
</gene>
<dbReference type="EMBL" id="U00089">
    <property type="protein sequence ID" value="AAB95773.1"/>
    <property type="molecule type" value="Genomic_DNA"/>
</dbReference>
<dbReference type="PIR" id="S73451">
    <property type="entry name" value="S73451"/>
</dbReference>
<dbReference type="RefSeq" id="NP_109717.1">
    <property type="nucleotide sequence ID" value="NC_000912.1"/>
</dbReference>
<dbReference type="RefSeq" id="WP_010874386.1">
    <property type="nucleotide sequence ID" value="NZ_OU342337.1"/>
</dbReference>
<dbReference type="SMR" id="P75085"/>
<dbReference type="IntAct" id="P75085">
    <property type="interactions" value="2"/>
</dbReference>
<dbReference type="STRING" id="272634.MPN_029"/>
<dbReference type="EnsemblBacteria" id="AAB95773">
    <property type="protein sequence ID" value="AAB95773"/>
    <property type="gene ID" value="MPN_029"/>
</dbReference>
<dbReference type="GeneID" id="66609330"/>
<dbReference type="KEGG" id="mpn:MPN_029"/>
<dbReference type="PATRIC" id="fig|272634.6.peg.28"/>
<dbReference type="HOGENOM" id="CLU_074944_2_1_14"/>
<dbReference type="OrthoDB" id="9801844at2"/>
<dbReference type="BioCyc" id="MPNE272634:G1GJ3-43-MONOMER"/>
<dbReference type="UniPathway" id="UPA00345"/>
<dbReference type="Proteomes" id="UP000000808">
    <property type="component" value="Chromosome"/>
</dbReference>
<dbReference type="GO" id="GO:0005737">
    <property type="term" value="C:cytoplasm"/>
    <property type="evidence" value="ECO:0007669"/>
    <property type="project" value="UniProtKB-SubCell"/>
</dbReference>
<dbReference type="GO" id="GO:0003746">
    <property type="term" value="F:translation elongation factor activity"/>
    <property type="evidence" value="ECO:0007669"/>
    <property type="project" value="UniProtKB-UniRule"/>
</dbReference>
<dbReference type="GO" id="GO:0043043">
    <property type="term" value="P:peptide biosynthetic process"/>
    <property type="evidence" value="ECO:0007669"/>
    <property type="project" value="InterPro"/>
</dbReference>
<dbReference type="CDD" id="cd04470">
    <property type="entry name" value="S1_EF-P_repeat_1"/>
    <property type="match status" value="1"/>
</dbReference>
<dbReference type="FunFam" id="2.40.50.140:FF:000004">
    <property type="entry name" value="Elongation factor P"/>
    <property type="match status" value="1"/>
</dbReference>
<dbReference type="FunFam" id="2.40.50.140:FF:000009">
    <property type="entry name" value="Elongation factor P"/>
    <property type="match status" value="1"/>
</dbReference>
<dbReference type="Gene3D" id="2.30.30.30">
    <property type="match status" value="1"/>
</dbReference>
<dbReference type="Gene3D" id="2.40.50.140">
    <property type="entry name" value="Nucleic acid-binding proteins"/>
    <property type="match status" value="2"/>
</dbReference>
<dbReference type="HAMAP" id="MF_00141">
    <property type="entry name" value="EF_P"/>
    <property type="match status" value="1"/>
</dbReference>
<dbReference type="InterPro" id="IPR015365">
    <property type="entry name" value="Elong-fact-P_C"/>
</dbReference>
<dbReference type="InterPro" id="IPR012340">
    <property type="entry name" value="NA-bd_OB-fold"/>
</dbReference>
<dbReference type="InterPro" id="IPR014722">
    <property type="entry name" value="Rib_uL2_dom2"/>
</dbReference>
<dbReference type="InterPro" id="IPR020599">
    <property type="entry name" value="Transl_elong_fac_P/YeiP"/>
</dbReference>
<dbReference type="InterPro" id="IPR013185">
    <property type="entry name" value="Transl_elong_KOW-like"/>
</dbReference>
<dbReference type="InterPro" id="IPR001059">
    <property type="entry name" value="Transl_elong_P/YeiP_cen"/>
</dbReference>
<dbReference type="InterPro" id="IPR013852">
    <property type="entry name" value="Transl_elong_P/YeiP_CS"/>
</dbReference>
<dbReference type="InterPro" id="IPR011768">
    <property type="entry name" value="Transl_elongation_fac_P"/>
</dbReference>
<dbReference type="InterPro" id="IPR008991">
    <property type="entry name" value="Translation_prot_SH3-like_sf"/>
</dbReference>
<dbReference type="NCBIfam" id="TIGR00038">
    <property type="entry name" value="efp"/>
    <property type="match status" value="1"/>
</dbReference>
<dbReference type="NCBIfam" id="NF001810">
    <property type="entry name" value="PRK00529.1"/>
    <property type="match status" value="1"/>
</dbReference>
<dbReference type="PANTHER" id="PTHR30053">
    <property type="entry name" value="ELONGATION FACTOR P"/>
    <property type="match status" value="1"/>
</dbReference>
<dbReference type="PANTHER" id="PTHR30053:SF12">
    <property type="entry name" value="ELONGATION FACTOR P (EF-P) FAMILY PROTEIN"/>
    <property type="match status" value="1"/>
</dbReference>
<dbReference type="Pfam" id="PF01132">
    <property type="entry name" value="EFP"/>
    <property type="match status" value="1"/>
</dbReference>
<dbReference type="Pfam" id="PF08207">
    <property type="entry name" value="EFP_N"/>
    <property type="match status" value="1"/>
</dbReference>
<dbReference type="Pfam" id="PF09285">
    <property type="entry name" value="Elong-fact-P_C"/>
    <property type="match status" value="1"/>
</dbReference>
<dbReference type="PIRSF" id="PIRSF005901">
    <property type="entry name" value="EF-P"/>
    <property type="match status" value="1"/>
</dbReference>
<dbReference type="SMART" id="SM01185">
    <property type="entry name" value="EFP"/>
    <property type="match status" value="1"/>
</dbReference>
<dbReference type="SMART" id="SM00841">
    <property type="entry name" value="Elong-fact-P_C"/>
    <property type="match status" value="1"/>
</dbReference>
<dbReference type="SUPFAM" id="SSF50249">
    <property type="entry name" value="Nucleic acid-binding proteins"/>
    <property type="match status" value="2"/>
</dbReference>
<dbReference type="SUPFAM" id="SSF50104">
    <property type="entry name" value="Translation proteins SH3-like domain"/>
    <property type="match status" value="1"/>
</dbReference>
<dbReference type="PROSITE" id="PS01275">
    <property type="entry name" value="EFP"/>
    <property type="match status" value="1"/>
</dbReference>
<keyword id="KW-0963">Cytoplasm</keyword>
<keyword id="KW-0251">Elongation factor</keyword>
<keyword id="KW-0648">Protein biosynthesis</keyword>
<keyword id="KW-1185">Reference proteome</keyword>
<proteinExistence type="evidence at protein level"/>
<feature type="chain" id="PRO_0000094290" description="Elongation factor P">
    <location>
        <begin position="1"/>
        <end position="190"/>
    </location>
</feature>
<name>EFP_MYCPN</name>
<protein>
    <recommendedName>
        <fullName>Elongation factor P</fullName>
        <shortName>EF-P</shortName>
    </recommendedName>
</protein>
<organism>
    <name type="scientific">Mycoplasma pneumoniae (strain ATCC 29342 / M129 / Subtype 1)</name>
    <name type="common">Mycoplasmoides pneumoniae</name>
    <dbReference type="NCBI Taxonomy" id="272634"/>
    <lineage>
        <taxon>Bacteria</taxon>
        <taxon>Bacillati</taxon>
        <taxon>Mycoplasmatota</taxon>
        <taxon>Mycoplasmoidales</taxon>
        <taxon>Mycoplasmoidaceae</taxon>
        <taxon>Mycoplasmoides</taxon>
    </lineage>
</organism>
<accession>P75085</accession>
<comment type="function">
    <text evidence="1">Involved in peptide bond synthesis. Stimulates efficient translation and peptide-bond synthesis on native or reconstituted 70S ribosomes in vitro. Probably functions indirectly by altering the affinity of the ribosome for aminoacyl-tRNA, thus increasing their reactivity as acceptors for peptidyl transferase (By similarity).</text>
</comment>
<comment type="pathway">
    <text>Protein biosynthesis; polypeptide chain elongation.</text>
</comment>
<comment type="subcellular location">
    <subcellularLocation>
        <location evidence="1">Cytoplasm</location>
    </subcellularLocation>
</comment>
<comment type="similarity">
    <text evidence="2">Belongs to the elongation factor P family.</text>
</comment>
<sequence>MADMIEAKSLRSGQTIFGPNKEILLVLENTFNKTAMRQGIVKTKVKNLRTGAIVWIEFTGDKLEQVIIDKKKMTFLYKDGANYVFMDQQDYSQIEIPEKQLEWEKNFITEDSEVTIISYQSEILGVNLPELVPIEVEFAEEAVQGNTANMARKRARLVSGYELDVPQFIRTGDKIVISTIDGSYRERYNK</sequence>
<evidence type="ECO:0000250" key="1"/>
<evidence type="ECO:0000305" key="2"/>
<reference key="1">
    <citation type="journal article" date="1996" name="Nucleic Acids Res.">
        <title>Complete sequence analysis of the genome of the bacterium Mycoplasma pneumoniae.</title>
        <authorList>
            <person name="Himmelreich R."/>
            <person name="Hilbert H."/>
            <person name="Plagens H."/>
            <person name="Pirkl E."/>
            <person name="Li B.-C."/>
            <person name="Herrmann R."/>
        </authorList>
    </citation>
    <scope>NUCLEOTIDE SEQUENCE [LARGE SCALE GENOMIC DNA]</scope>
    <source>
        <strain>ATCC 29342 / M129 / Subtype 1</strain>
    </source>
</reference>
<reference key="2">
    <citation type="journal article" date="2000" name="Electrophoresis">
        <title>Towards a two-dimensional proteome map of Mycoplasma pneumoniae.</title>
        <authorList>
            <person name="Regula J.T."/>
            <person name="Ueberle B."/>
            <person name="Boguth G."/>
            <person name="Goerg A."/>
            <person name="Schnoelzer M."/>
            <person name="Herrmann R."/>
            <person name="Frank R."/>
        </authorList>
    </citation>
    <scope>IDENTIFICATION BY MASS SPECTROMETRY</scope>
    <source>
        <strain>ATCC 29342 / M129 / Subtype 1</strain>
    </source>
</reference>